<sequence>MTNQERAEEPVLRHDWTQGEAEALFALPFNELLFQAQTIHRRHFDPNEVQVSSLLSIKTGACSEDCAYCPQSAHYETGVKRESLMSLEDVLEAAQRAREEGATRFCMGAAWRSPRDGDLEAIAAMVEGVKALGMETCVTAGMLSDEQARRLKEAGLDYYNHNLDTSESYYGEIITTRTYQDRLDTLQRVRDAGMHVCCGGIVGMGESAADRAGLLIGLANLPRHPESVPINLLVRVEGTPLADTAALDPFDFVRTVAVARIMMPASRVRLSAGRSDMSDEMQALCFLAGANSIFYGDRLLTTENPQAQRDRRLFARLGLRMAGLGC</sequence>
<dbReference type="EC" id="2.8.1.6" evidence="1"/>
<dbReference type="EMBL" id="AE017282">
    <property type="protein sequence ID" value="AAU92557.1"/>
    <property type="status" value="ALT_INIT"/>
    <property type="molecule type" value="Genomic_DNA"/>
</dbReference>
<dbReference type="RefSeq" id="WP_041361465.1">
    <property type="nucleotide sequence ID" value="NC_002977.6"/>
</dbReference>
<dbReference type="SMR" id="Q609V2"/>
<dbReference type="STRING" id="243233.MCA1125"/>
<dbReference type="GeneID" id="88223418"/>
<dbReference type="KEGG" id="mca:MCA1125"/>
<dbReference type="eggNOG" id="COG0502">
    <property type="taxonomic scope" value="Bacteria"/>
</dbReference>
<dbReference type="HOGENOM" id="CLU_033172_1_2_6"/>
<dbReference type="UniPathway" id="UPA00078">
    <property type="reaction ID" value="UER00162"/>
</dbReference>
<dbReference type="Proteomes" id="UP000006821">
    <property type="component" value="Chromosome"/>
</dbReference>
<dbReference type="GO" id="GO:0051537">
    <property type="term" value="F:2 iron, 2 sulfur cluster binding"/>
    <property type="evidence" value="ECO:0007669"/>
    <property type="project" value="UniProtKB-KW"/>
</dbReference>
<dbReference type="GO" id="GO:0051539">
    <property type="term" value="F:4 iron, 4 sulfur cluster binding"/>
    <property type="evidence" value="ECO:0007669"/>
    <property type="project" value="UniProtKB-KW"/>
</dbReference>
<dbReference type="GO" id="GO:0004076">
    <property type="term" value="F:biotin synthase activity"/>
    <property type="evidence" value="ECO:0007669"/>
    <property type="project" value="UniProtKB-UniRule"/>
</dbReference>
<dbReference type="GO" id="GO:0005506">
    <property type="term" value="F:iron ion binding"/>
    <property type="evidence" value="ECO:0007669"/>
    <property type="project" value="UniProtKB-UniRule"/>
</dbReference>
<dbReference type="GO" id="GO:0009102">
    <property type="term" value="P:biotin biosynthetic process"/>
    <property type="evidence" value="ECO:0007669"/>
    <property type="project" value="UniProtKB-UniRule"/>
</dbReference>
<dbReference type="CDD" id="cd01335">
    <property type="entry name" value="Radical_SAM"/>
    <property type="match status" value="1"/>
</dbReference>
<dbReference type="FunFam" id="3.20.20.70:FF:000011">
    <property type="entry name" value="Biotin synthase"/>
    <property type="match status" value="1"/>
</dbReference>
<dbReference type="Gene3D" id="3.20.20.70">
    <property type="entry name" value="Aldolase class I"/>
    <property type="match status" value="1"/>
</dbReference>
<dbReference type="HAMAP" id="MF_01694">
    <property type="entry name" value="BioB"/>
    <property type="match status" value="1"/>
</dbReference>
<dbReference type="InterPro" id="IPR013785">
    <property type="entry name" value="Aldolase_TIM"/>
</dbReference>
<dbReference type="InterPro" id="IPR010722">
    <property type="entry name" value="BATS_dom"/>
</dbReference>
<dbReference type="InterPro" id="IPR002684">
    <property type="entry name" value="Biotin_synth/BioAB"/>
</dbReference>
<dbReference type="InterPro" id="IPR024177">
    <property type="entry name" value="Biotin_synthase"/>
</dbReference>
<dbReference type="InterPro" id="IPR006638">
    <property type="entry name" value="Elp3/MiaA/NifB-like_rSAM"/>
</dbReference>
<dbReference type="InterPro" id="IPR007197">
    <property type="entry name" value="rSAM"/>
</dbReference>
<dbReference type="NCBIfam" id="TIGR00433">
    <property type="entry name" value="bioB"/>
    <property type="match status" value="1"/>
</dbReference>
<dbReference type="PANTHER" id="PTHR22976">
    <property type="entry name" value="BIOTIN SYNTHASE"/>
    <property type="match status" value="1"/>
</dbReference>
<dbReference type="PANTHER" id="PTHR22976:SF2">
    <property type="entry name" value="BIOTIN SYNTHASE, MITOCHONDRIAL"/>
    <property type="match status" value="1"/>
</dbReference>
<dbReference type="Pfam" id="PF06968">
    <property type="entry name" value="BATS"/>
    <property type="match status" value="1"/>
</dbReference>
<dbReference type="Pfam" id="PF04055">
    <property type="entry name" value="Radical_SAM"/>
    <property type="match status" value="1"/>
</dbReference>
<dbReference type="PIRSF" id="PIRSF001619">
    <property type="entry name" value="Biotin_synth"/>
    <property type="match status" value="1"/>
</dbReference>
<dbReference type="SFLD" id="SFLDG01060">
    <property type="entry name" value="BATS_domain_containing"/>
    <property type="match status" value="1"/>
</dbReference>
<dbReference type="SFLD" id="SFLDF00272">
    <property type="entry name" value="biotin_synthase"/>
    <property type="match status" value="1"/>
</dbReference>
<dbReference type="SMART" id="SM00876">
    <property type="entry name" value="BATS"/>
    <property type="match status" value="1"/>
</dbReference>
<dbReference type="SMART" id="SM00729">
    <property type="entry name" value="Elp3"/>
    <property type="match status" value="1"/>
</dbReference>
<dbReference type="SUPFAM" id="SSF102114">
    <property type="entry name" value="Radical SAM enzymes"/>
    <property type="match status" value="1"/>
</dbReference>
<dbReference type="PROSITE" id="PS51918">
    <property type="entry name" value="RADICAL_SAM"/>
    <property type="match status" value="1"/>
</dbReference>
<accession>Q609V2</accession>
<feature type="chain" id="PRO_0000381459" description="Biotin synthase">
    <location>
        <begin position="1"/>
        <end position="326"/>
    </location>
</feature>
<feature type="domain" description="Radical SAM core" evidence="2">
    <location>
        <begin position="47"/>
        <end position="274"/>
    </location>
</feature>
<feature type="binding site" evidence="1">
    <location>
        <position position="62"/>
    </location>
    <ligand>
        <name>[4Fe-4S] cluster</name>
        <dbReference type="ChEBI" id="CHEBI:49883"/>
        <note>4Fe-4S-S-AdoMet</note>
    </ligand>
</feature>
<feature type="binding site" evidence="1">
    <location>
        <position position="66"/>
    </location>
    <ligand>
        <name>[4Fe-4S] cluster</name>
        <dbReference type="ChEBI" id="CHEBI:49883"/>
        <note>4Fe-4S-S-AdoMet</note>
    </ligand>
</feature>
<feature type="binding site" evidence="1">
    <location>
        <position position="69"/>
    </location>
    <ligand>
        <name>[4Fe-4S] cluster</name>
        <dbReference type="ChEBI" id="CHEBI:49883"/>
        <note>4Fe-4S-S-AdoMet</note>
    </ligand>
</feature>
<feature type="binding site" evidence="1">
    <location>
        <position position="106"/>
    </location>
    <ligand>
        <name>[2Fe-2S] cluster</name>
        <dbReference type="ChEBI" id="CHEBI:190135"/>
    </ligand>
</feature>
<feature type="binding site" evidence="1">
    <location>
        <position position="137"/>
    </location>
    <ligand>
        <name>[2Fe-2S] cluster</name>
        <dbReference type="ChEBI" id="CHEBI:190135"/>
    </ligand>
</feature>
<feature type="binding site" evidence="1">
    <location>
        <position position="197"/>
    </location>
    <ligand>
        <name>[2Fe-2S] cluster</name>
        <dbReference type="ChEBI" id="CHEBI:190135"/>
    </ligand>
</feature>
<feature type="binding site" evidence="1">
    <location>
        <position position="269"/>
    </location>
    <ligand>
        <name>[2Fe-2S] cluster</name>
        <dbReference type="ChEBI" id="CHEBI:190135"/>
    </ligand>
</feature>
<evidence type="ECO:0000255" key="1">
    <source>
        <dbReference type="HAMAP-Rule" id="MF_01694"/>
    </source>
</evidence>
<evidence type="ECO:0000255" key="2">
    <source>
        <dbReference type="PROSITE-ProRule" id="PRU01266"/>
    </source>
</evidence>
<evidence type="ECO:0000305" key="3"/>
<comment type="function">
    <text evidence="1">Catalyzes the conversion of dethiobiotin (DTB) to biotin by the insertion of a sulfur atom into dethiobiotin via a radical-based mechanism.</text>
</comment>
<comment type="catalytic activity">
    <reaction evidence="1">
        <text>(4R,5S)-dethiobiotin + (sulfur carrier)-SH + 2 reduced [2Fe-2S]-[ferredoxin] + 2 S-adenosyl-L-methionine = (sulfur carrier)-H + biotin + 2 5'-deoxyadenosine + 2 L-methionine + 2 oxidized [2Fe-2S]-[ferredoxin]</text>
        <dbReference type="Rhea" id="RHEA:22060"/>
        <dbReference type="Rhea" id="RHEA-COMP:10000"/>
        <dbReference type="Rhea" id="RHEA-COMP:10001"/>
        <dbReference type="Rhea" id="RHEA-COMP:14737"/>
        <dbReference type="Rhea" id="RHEA-COMP:14739"/>
        <dbReference type="ChEBI" id="CHEBI:17319"/>
        <dbReference type="ChEBI" id="CHEBI:29917"/>
        <dbReference type="ChEBI" id="CHEBI:33737"/>
        <dbReference type="ChEBI" id="CHEBI:33738"/>
        <dbReference type="ChEBI" id="CHEBI:57586"/>
        <dbReference type="ChEBI" id="CHEBI:57844"/>
        <dbReference type="ChEBI" id="CHEBI:59789"/>
        <dbReference type="ChEBI" id="CHEBI:64428"/>
        <dbReference type="ChEBI" id="CHEBI:149473"/>
        <dbReference type="EC" id="2.8.1.6"/>
    </reaction>
</comment>
<comment type="cofactor">
    <cofactor evidence="1">
        <name>[4Fe-4S] cluster</name>
        <dbReference type="ChEBI" id="CHEBI:49883"/>
    </cofactor>
    <text evidence="1">Binds 1 [4Fe-4S] cluster. The cluster is coordinated with 3 cysteines and an exchangeable S-adenosyl-L-methionine.</text>
</comment>
<comment type="cofactor">
    <cofactor evidence="1">
        <name>[2Fe-2S] cluster</name>
        <dbReference type="ChEBI" id="CHEBI:190135"/>
    </cofactor>
    <text evidence="1">Binds 1 [2Fe-2S] cluster. The cluster is coordinated with 3 cysteines and 1 arginine.</text>
</comment>
<comment type="pathway">
    <text evidence="1">Cofactor biosynthesis; biotin biosynthesis; biotin from 7,8-diaminononanoate: step 2/2.</text>
</comment>
<comment type="subunit">
    <text evidence="1">Homodimer.</text>
</comment>
<comment type="similarity">
    <text evidence="1">Belongs to the radical SAM superfamily. Biotin synthase family.</text>
</comment>
<comment type="sequence caution" evidence="3">
    <conflict type="erroneous initiation">
        <sequence resource="EMBL-CDS" id="AAU92557"/>
    </conflict>
</comment>
<keyword id="KW-0001">2Fe-2S</keyword>
<keyword id="KW-0004">4Fe-4S</keyword>
<keyword id="KW-0093">Biotin biosynthesis</keyword>
<keyword id="KW-0408">Iron</keyword>
<keyword id="KW-0411">Iron-sulfur</keyword>
<keyword id="KW-0479">Metal-binding</keyword>
<keyword id="KW-1185">Reference proteome</keyword>
<keyword id="KW-0949">S-adenosyl-L-methionine</keyword>
<keyword id="KW-0808">Transferase</keyword>
<organism>
    <name type="scientific">Methylococcus capsulatus (strain ATCC 33009 / NCIMB 11132 / Bath)</name>
    <dbReference type="NCBI Taxonomy" id="243233"/>
    <lineage>
        <taxon>Bacteria</taxon>
        <taxon>Pseudomonadati</taxon>
        <taxon>Pseudomonadota</taxon>
        <taxon>Gammaproteobacteria</taxon>
        <taxon>Methylococcales</taxon>
        <taxon>Methylococcaceae</taxon>
        <taxon>Methylococcus</taxon>
    </lineage>
</organism>
<name>BIOB_METCA</name>
<proteinExistence type="inferred from homology"/>
<gene>
    <name evidence="1" type="primary">bioB</name>
    <name type="ordered locus">MCA1125</name>
</gene>
<reference key="1">
    <citation type="journal article" date="2004" name="PLoS Biol.">
        <title>Genomic insights into methanotrophy: the complete genome sequence of Methylococcus capsulatus (Bath).</title>
        <authorList>
            <person name="Ward N.L."/>
            <person name="Larsen O."/>
            <person name="Sakwa J."/>
            <person name="Bruseth L."/>
            <person name="Khouri H.M."/>
            <person name="Durkin A.S."/>
            <person name="Dimitrov G."/>
            <person name="Jiang L."/>
            <person name="Scanlan D."/>
            <person name="Kang K.H."/>
            <person name="Lewis M.R."/>
            <person name="Nelson K.E."/>
            <person name="Methe B.A."/>
            <person name="Wu M."/>
            <person name="Heidelberg J.F."/>
            <person name="Paulsen I.T."/>
            <person name="Fouts D.E."/>
            <person name="Ravel J."/>
            <person name="Tettelin H."/>
            <person name="Ren Q."/>
            <person name="Read T.D."/>
            <person name="DeBoy R.T."/>
            <person name="Seshadri R."/>
            <person name="Salzberg S.L."/>
            <person name="Jensen H.B."/>
            <person name="Birkeland N.K."/>
            <person name="Nelson W.C."/>
            <person name="Dodson R.J."/>
            <person name="Grindhaug S.H."/>
            <person name="Holt I.E."/>
            <person name="Eidhammer I."/>
            <person name="Jonasen I."/>
            <person name="Vanaken S."/>
            <person name="Utterback T.R."/>
            <person name="Feldblyum T.V."/>
            <person name="Fraser C.M."/>
            <person name="Lillehaug J.R."/>
            <person name="Eisen J.A."/>
        </authorList>
    </citation>
    <scope>NUCLEOTIDE SEQUENCE [LARGE SCALE GENOMIC DNA]</scope>
    <source>
        <strain>ATCC 33009 / NCIMB 11132 / Bath</strain>
    </source>
</reference>
<protein>
    <recommendedName>
        <fullName evidence="1">Biotin synthase</fullName>
        <ecNumber evidence="1">2.8.1.6</ecNumber>
    </recommendedName>
</protein>